<proteinExistence type="evidence at transcript level"/>
<name>S22A1_BOVIN</name>
<dbReference type="EMBL" id="BC151505">
    <property type="protein sequence ID" value="AAI51506.1"/>
    <property type="molecule type" value="mRNA"/>
</dbReference>
<dbReference type="RefSeq" id="NP_001094568.1">
    <property type="nucleotide sequence ID" value="NM_001101098.2"/>
</dbReference>
<dbReference type="SMR" id="A7MBE0"/>
<dbReference type="FunCoup" id="A7MBE0">
    <property type="interactions" value="74"/>
</dbReference>
<dbReference type="STRING" id="9913.ENSBTAP00000004059"/>
<dbReference type="BindingDB" id="A7MBE0"/>
<dbReference type="GlyCosmos" id="A7MBE0">
    <property type="glycosylation" value="1 site, No reported glycans"/>
</dbReference>
<dbReference type="GlyGen" id="A7MBE0">
    <property type="glycosylation" value="1 site"/>
</dbReference>
<dbReference type="PaxDb" id="9913-ENSBTAP00000004059"/>
<dbReference type="Ensembl" id="ENSBTAT00000004059.6">
    <property type="protein sequence ID" value="ENSBTAP00000004059.4"/>
    <property type="gene ID" value="ENSBTAG00000008540.6"/>
</dbReference>
<dbReference type="GeneID" id="519461"/>
<dbReference type="KEGG" id="bta:519461"/>
<dbReference type="CTD" id="6580"/>
<dbReference type="VEuPathDB" id="HostDB:ENSBTAG00000008540"/>
<dbReference type="VGNC" id="VGNC:34719">
    <property type="gene designation" value="SLC22A1"/>
</dbReference>
<dbReference type="eggNOG" id="KOG0255">
    <property type="taxonomic scope" value="Eukaryota"/>
</dbReference>
<dbReference type="GeneTree" id="ENSGT00940000162065"/>
<dbReference type="HOGENOM" id="CLU_001265_33_5_1"/>
<dbReference type="InParanoid" id="A7MBE0"/>
<dbReference type="OMA" id="IMIFIPH"/>
<dbReference type="OrthoDB" id="5141738at2759"/>
<dbReference type="TreeFam" id="TF315847"/>
<dbReference type="Reactome" id="R-BTA-112311">
    <property type="pathway name" value="Neurotransmitter clearance"/>
</dbReference>
<dbReference type="Reactome" id="R-BTA-181430">
    <property type="pathway name" value="Norepinephrine Neurotransmitter Release Cycle"/>
</dbReference>
<dbReference type="Reactome" id="R-BTA-2161517">
    <property type="pathway name" value="Abacavir transmembrane transport"/>
</dbReference>
<dbReference type="Reactome" id="R-BTA-442660">
    <property type="pathway name" value="Na+/Cl- dependent neurotransmitter transporters"/>
</dbReference>
<dbReference type="Reactome" id="R-BTA-549127">
    <property type="pathway name" value="Organic cation transport"/>
</dbReference>
<dbReference type="Reactome" id="R-BTA-9793528">
    <property type="pathway name" value="Ciprofloxacin ADME"/>
</dbReference>
<dbReference type="Proteomes" id="UP000009136">
    <property type="component" value="Chromosome 9"/>
</dbReference>
<dbReference type="Bgee" id="ENSBTAG00000008540">
    <property type="expression patterns" value="Expressed in cortex of kidney and 30 other cell types or tissues"/>
</dbReference>
<dbReference type="GO" id="GO:0016324">
    <property type="term" value="C:apical plasma membrane"/>
    <property type="evidence" value="ECO:0000250"/>
    <property type="project" value="UniProtKB"/>
</dbReference>
<dbReference type="GO" id="GO:0009925">
    <property type="term" value="C:basal plasma membrane"/>
    <property type="evidence" value="ECO:0000250"/>
    <property type="project" value="UniProtKB"/>
</dbReference>
<dbReference type="GO" id="GO:0016323">
    <property type="term" value="C:basolateral plasma membrane"/>
    <property type="evidence" value="ECO:0000250"/>
    <property type="project" value="UniProtKB"/>
</dbReference>
<dbReference type="GO" id="GO:0016328">
    <property type="term" value="C:lateral plasma membrane"/>
    <property type="evidence" value="ECO:0000250"/>
    <property type="project" value="UniProtKB"/>
</dbReference>
<dbReference type="GO" id="GO:0098793">
    <property type="term" value="C:presynapse"/>
    <property type="evidence" value="ECO:0007669"/>
    <property type="project" value="GOC"/>
</dbReference>
<dbReference type="GO" id="GO:1901235">
    <property type="term" value="F:(R)-carnitine transmembrane transporter activity"/>
    <property type="evidence" value="ECO:0000250"/>
    <property type="project" value="UniProtKB"/>
</dbReference>
<dbReference type="GO" id="GO:0005277">
    <property type="term" value="F:acetylcholine transmembrane transporter activity"/>
    <property type="evidence" value="ECO:0000250"/>
    <property type="project" value="UniProtKB"/>
</dbReference>
<dbReference type="GO" id="GO:0008504">
    <property type="term" value="F:monoamine transmembrane transporter activity"/>
    <property type="evidence" value="ECO:0000250"/>
    <property type="project" value="UniProtKB"/>
</dbReference>
<dbReference type="GO" id="GO:0005326">
    <property type="term" value="F:neurotransmitter transmembrane transporter activity"/>
    <property type="evidence" value="ECO:0000250"/>
    <property type="project" value="UniProtKB"/>
</dbReference>
<dbReference type="GO" id="GO:0008514">
    <property type="term" value="F:organic anion transmembrane transporter activity"/>
    <property type="evidence" value="ECO:0000250"/>
    <property type="project" value="UniProtKB"/>
</dbReference>
<dbReference type="GO" id="GO:0015101">
    <property type="term" value="F:organic cation transmembrane transporter activity"/>
    <property type="evidence" value="ECO:0000250"/>
    <property type="project" value="UniProtKB"/>
</dbReference>
<dbReference type="GO" id="GO:0015132">
    <property type="term" value="F:prostaglandin transmembrane transporter activity"/>
    <property type="evidence" value="ECO:0000250"/>
    <property type="project" value="UniProtKB"/>
</dbReference>
<dbReference type="GO" id="GO:0015489">
    <property type="term" value="F:putrescine transmembrane transporter activity"/>
    <property type="evidence" value="ECO:0000250"/>
    <property type="project" value="UniProtKB"/>
</dbReference>
<dbReference type="GO" id="GO:0015214">
    <property type="term" value="F:pyrimidine nucleoside transmembrane transporter activity"/>
    <property type="evidence" value="ECO:0007669"/>
    <property type="project" value="Ensembl"/>
</dbReference>
<dbReference type="GO" id="GO:0015651">
    <property type="term" value="F:quaternary ammonium group transmembrane transporter activity"/>
    <property type="evidence" value="ECO:0000250"/>
    <property type="project" value="UniProtKB"/>
</dbReference>
<dbReference type="GO" id="GO:0015606">
    <property type="term" value="F:spermidine transmembrane transporter activity"/>
    <property type="evidence" value="ECO:0000250"/>
    <property type="project" value="UniProtKB"/>
</dbReference>
<dbReference type="GO" id="GO:0015234">
    <property type="term" value="F:thiamine transmembrane transporter activity"/>
    <property type="evidence" value="ECO:0007669"/>
    <property type="project" value="Ensembl"/>
</dbReference>
<dbReference type="GO" id="GO:0019534">
    <property type="term" value="F:toxin transmembrane transporter activity"/>
    <property type="evidence" value="ECO:0007669"/>
    <property type="project" value="Ensembl"/>
</dbReference>
<dbReference type="GO" id="GO:0042910">
    <property type="term" value="F:xenobiotic transmembrane transporter activity"/>
    <property type="evidence" value="ECO:0000250"/>
    <property type="project" value="UniProtKB"/>
</dbReference>
<dbReference type="GO" id="GO:1902270">
    <property type="term" value="P:(R)-carnitine transmembrane transport"/>
    <property type="evidence" value="ECO:0000250"/>
    <property type="project" value="UniProtKB"/>
</dbReference>
<dbReference type="GO" id="GO:0015870">
    <property type="term" value="P:acetylcholine transport"/>
    <property type="evidence" value="ECO:0000250"/>
    <property type="project" value="UniProtKB"/>
</dbReference>
<dbReference type="GO" id="GO:1990748">
    <property type="term" value="P:cellular detoxification"/>
    <property type="evidence" value="ECO:0007669"/>
    <property type="project" value="Ensembl"/>
</dbReference>
<dbReference type="GO" id="GO:0015872">
    <property type="term" value="P:dopamine transport"/>
    <property type="evidence" value="ECO:0000250"/>
    <property type="project" value="UniProtKB"/>
</dbReference>
<dbReference type="GO" id="GO:0090494">
    <property type="term" value="P:dopamine uptake"/>
    <property type="evidence" value="ECO:0007669"/>
    <property type="project" value="Ensembl"/>
</dbReference>
<dbReference type="GO" id="GO:0048241">
    <property type="term" value="P:epinephrine transport"/>
    <property type="evidence" value="ECO:0007669"/>
    <property type="project" value="Ensembl"/>
</dbReference>
<dbReference type="GO" id="GO:0015844">
    <property type="term" value="P:monoamine transport"/>
    <property type="evidence" value="ECO:0000250"/>
    <property type="project" value="UniProtKB"/>
</dbReference>
<dbReference type="GO" id="GO:0006812">
    <property type="term" value="P:monoatomic cation transport"/>
    <property type="evidence" value="ECO:0007669"/>
    <property type="project" value="Ensembl"/>
</dbReference>
<dbReference type="GO" id="GO:0015874">
    <property type="term" value="P:norepinephrine transport"/>
    <property type="evidence" value="ECO:0000250"/>
    <property type="project" value="UniProtKB"/>
</dbReference>
<dbReference type="GO" id="GO:1902616">
    <property type="term" value="P:O-acyl-L-carnitine transmembrane transport"/>
    <property type="evidence" value="ECO:0000250"/>
    <property type="project" value="UniProtKB"/>
</dbReference>
<dbReference type="GO" id="GO:0015695">
    <property type="term" value="P:organic cation transport"/>
    <property type="evidence" value="ECO:0000318"/>
    <property type="project" value="GO_Central"/>
</dbReference>
<dbReference type="GO" id="GO:0015732">
    <property type="term" value="P:prostaglandin transport"/>
    <property type="evidence" value="ECO:0000250"/>
    <property type="project" value="UniProtKB"/>
</dbReference>
<dbReference type="GO" id="GO:0015847">
    <property type="term" value="P:putrescine transport"/>
    <property type="evidence" value="ECO:0000250"/>
    <property type="project" value="UniProtKB"/>
</dbReference>
<dbReference type="GO" id="GO:0006837">
    <property type="term" value="P:serotonin transport"/>
    <property type="evidence" value="ECO:0000250"/>
    <property type="project" value="UniProtKB"/>
</dbReference>
<dbReference type="GO" id="GO:0051610">
    <property type="term" value="P:serotonin uptake"/>
    <property type="evidence" value="ECO:0007669"/>
    <property type="project" value="Ensembl"/>
</dbReference>
<dbReference type="GO" id="GO:0015848">
    <property type="term" value="P:spermidine transport"/>
    <property type="evidence" value="ECO:0000250"/>
    <property type="project" value="UniProtKB"/>
</dbReference>
<dbReference type="GO" id="GO:0071934">
    <property type="term" value="P:thiamine transmembrane transport"/>
    <property type="evidence" value="ECO:0000250"/>
    <property type="project" value="UniProtKB"/>
</dbReference>
<dbReference type="GO" id="GO:0015888">
    <property type="term" value="P:thiamine transport"/>
    <property type="evidence" value="ECO:0000250"/>
    <property type="project" value="UniProtKB"/>
</dbReference>
<dbReference type="GO" id="GO:0042908">
    <property type="term" value="P:xenobiotic transport"/>
    <property type="evidence" value="ECO:0000250"/>
    <property type="project" value="UniProtKB"/>
</dbReference>
<dbReference type="FunFam" id="1.20.1250.20:FF:000148">
    <property type="entry name" value="Solute carrier family 22 member 2"/>
    <property type="match status" value="1"/>
</dbReference>
<dbReference type="Gene3D" id="1.20.1250.20">
    <property type="entry name" value="MFS general substrate transporter like domains"/>
    <property type="match status" value="1"/>
</dbReference>
<dbReference type="InterPro" id="IPR020846">
    <property type="entry name" value="MFS_dom"/>
</dbReference>
<dbReference type="InterPro" id="IPR005828">
    <property type="entry name" value="MFS_sugar_transport-like"/>
</dbReference>
<dbReference type="InterPro" id="IPR036259">
    <property type="entry name" value="MFS_trans_sf"/>
</dbReference>
<dbReference type="InterPro" id="IPR004749">
    <property type="entry name" value="Orgcat_transp/SVOP"/>
</dbReference>
<dbReference type="InterPro" id="IPR005829">
    <property type="entry name" value="Sugar_transporter_CS"/>
</dbReference>
<dbReference type="NCBIfam" id="TIGR00898">
    <property type="entry name" value="2A0119"/>
    <property type="match status" value="1"/>
</dbReference>
<dbReference type="PANTHER" id="PTHR24064">
    <property type="entry name" value="SOLUTE CARRIER FAMILY 22 MEMBER"/>
    <property type="match status" value="1"/>
</dbReference>
<dbReference type="Pfam" id="PF00083">
    <property type="entry name" value="Sugar_tr"/>
    <property type="match status" value="1"/>
</dbReference>
<dbReference type="SUPFAM" id="SSF103473">
    <property type="entry name" value="MFS general substrate transporter"/>
    <property type="match status" value="1"/>
</dbReference>
<dbReference type="PROSITE" id="PS50850">
    <property type="entry name" value="MFS"/>
    <property type="match status" value="1"/>
</dbReference>
<dbReference type="PROSITE" id="PS00216">
    <property type="entry name" value="SUGAR_TRANSPORT_1"/>
    <property type="match status" value="2"/>
</dbReference>
<accession>A7MBE0</accession>
<reference key="1">
    <citation type="submission" date="2007-07" db="EMBL/GenBank/DDBJ databases">
        <authorList>
            <consortium name="NIH - Mammalian Gene Collection (MGC) project"/>
        </authorList>
    </citation>
    <scope>NUCLEOTIDE SEQUENCE [LARGE SCALE MRNA]</scope>
    <source>
        <strain>Hereford</strain>
        <tissue>Kidney</tissue>
    </source>
</reference>
<keyword id="KW-1003">Cell membrane</keyword>
<keyword id="KW-0325">Glycoprotein</keyword>
<keyword id="KW-0406">Ion transport</keyword>
<keyword id="KW-0472">Membrane</keyword>
<keyword id="KW-0597">Phosphoprotein</keyword>
<keyword id="KW-1185">Reference proteome</keyword>
<keyword id="KW-0812">Transmembrane</keyword>
<keyword id="KW-1133">Transmembrane helix</keyword>
<keyword id="KW-0813">Transport</keyword>
<comment type="function">
    <text evidence="2 3 4">Electrogenic voltage-dependent transporter that mediates the transport of a variety of organic cations such as endogenous bioactive amines, cationic drugs and xenobiotics (By similarity). Functions as a pH- and Na(+)-independent, bidirectional transporter (By similarity). Cation cellular uptake or release is driven by the electrochemical potential (i.e. membrane potential and concentration gradient) and substrate selectivity (By similarity). Hydrophobicity is a major requirement for recognition in polyvalent substrates and inhibitors (By similarity). Primarily expressed in the basolateral membrane of hepatocytes and proximal tubules and involved in the uptake and disposition of cationic compounds from the blood by hepatic and renal clearance (By similarity). Most likely functions as an uptake carrier in enterocytes contributing to the intestinal elimination of organic cations from the systemic circulation. Transports endogenous monoamines such as N-1-methylnicotinamide (NMN), guanidine, neurotransmitters dopamine, serotonin, noradrenaline, adrenaline and histamine, and quaternary ammonium compound such as choline. Also transports natural polyamines such as spermidine, agmatine and putrescine at low affinity, but relatively high turnover. Involved in the hepatic and intestinal uptake of the vitamin B1/thiamine, hence regulating hepatic lipid and energy metabolism. Contributes to the influx and efflux of fatty acid carriers carnitines and acylcarnitines across the basolateral membrane of hepatocytes, from the liver to the systemic circulation and inversely and may be involved in regulating the systemic availability of hepatic acylcarnitines (By similarity). Also capable of transporting non-amine endogenous compounds such as prostaglandin E2 (PGE2) and prostaglandin F2-alpha (PGF2-alpha) (By similarity). May contribute to the transport of cationic compounds in testes across the blood-testis-barrier (By similarity). Also mediates the uptake of xenobiotics tributylmethylammonium (TBuMA), quinidine, N-methyl-quinine (NMQ), N-methyl-quinidine (NMQD) N-(4,4-azo-n-pentyl)-quinuclidine (APQ), azidoprocainamide methoiodide (AMP), N-(4,4-azo-n-pentyl)-21-deoxyajmalinium (APDA) and 4-(4-(dimethylamino)styryl)-N-methylpyridinium (ASP) (By similarity).</text>
</comment>
<comment type="catalytic activity">
    <reaction evidence="4">
        <text>1-methylnicotinamide(out) = 1-methylnicotinamide(in)</text>
        <dbReference type="Rhea" id="RHEA:73859"/>
        <dbReference type="ChEBI" id="CHEBI:16797"/>
    </reaction>
</comment>
<comment type="catalytic activity">
    <reaction evidence="2">
        <text>dopamine(out) = dopamine(in)</text>
        <dbReference type="Rhea" id="RHEA:73863"/>
        <dbReference type="ChEBI" id="CHEBI:59905"/>
    </reaction>
</comment>
<comment type="catalytic activity">
    <reaction evidence="2">
        <text>serotonin(out) = serotonin(in)</text>
        <dbReference type="Rhea" id="RHEA:73867"/>
        <dbReference type="ChEBI" id="CHEBI:350546"/>
    </reaction>
</comment>
<comment type="catalytic activity">
    <reaction evidence="2">
        <text>(R)-adrenaline(out) = (R)-adrenaline(in)</text>
        <dbReference type="Rhea" id="RHEA:73875"/>
        <dbReference type="ChEBI" id="CHEBI:71406"/>
    </reaction>
</comment>
<comment type="catalytic activity">
    <reaction evidence="2">
        <text>(R)-noradrenaline(out) = (R)-noradrenaline(in)</text>
        <dbReference type="Rhea" id="RHEA:73871"/>
        <dbReference type="ChEBI" id="CHEBI:72587"/>
    </reaction>
</comment>
<comment type="catalytic activity">
    <reaction evidence="2">
        <text>histamine(out) = histamine(in)</text>
        <dbReference type="Rhea" id="RHEA:73879"/>
        <dbReference type="ChEBI" id="CHEBI:58432"/>
    </reaction>
</comment>
<comment type="catalytic activity">
    <reaction evidence="4">
        <text>guanidine(out) = guanidine(in)</text>
        <dbReference type="Rhea" id="RHEA:73883"/>
        <dbReference type="ChEBI" id="CHEBI:30087"/>
    </reaction>
</comment>
<comment type="catalytic activity">
    <reaction evidence="2">
        <text>choline(out) = choline(in)</text>
        <dbReference type="Rhea" id="RHEA:32751"/>
        <dbReference type="ChEBI" id="CHEBI:15354"/>
    </reaction>
</comment>
<comment type="catalytic activity">
    <reaction evidence="3">
        <text>acetylcholine(in) = acetylcholine(out)</text>
        <dbReference type="Rhea" id="RHEA:74663"/>
        <dbReference type="ChEBI" id="CHEBI:15355"/>
    </reaction>
</comment>
<comment type="catalytic activity">
    <reaction evidence="2">
        <text>thiamine(in) = thiamine(out)</text>
        <dbReference type="Rhea" id="RHEA:34919"/>
        <dbReference type="ChEBI" id="CHEBI:18385"/>
    </reaction>
</comment>
<comment type="catalytic activity">
    <reaction evidence="2">
        <text>spermidine(in) = spermidine(out)</text>
        <dbReference type="Rhea" id="RHEA:35039"/>
        <dbReference type="ChEBI" id="CHEBI:57834"/>
    </reaction>
</comment>
<comment type="catalytic activity">
    <reaction evidence="3">
        <text>agmatine(out) = agmatine(in)</text>
        <dbReference type="Rhea" id="RHEA:72131"/>
        <dbReference type="ChEBI" id="CHEBI:58145"/>
    </reaction>
</comment>
<comment type="catalytic activity">
    <reaction evidence="3">
        <text>putrescine(out) = putrescine(in)</text>
        <dbReference type="Rhea" id="RHEA:72135"/>
        <dbReference type="ChEBI" id="CHEBI:326268"/>
    </reaction>
</comment>
<comment type="catalytic activity">
    <reaction evidence="2">
        <text>(R)-carnitine(in) = (R)-carnitine(out)</text>
        <dbReference type="Rhea" id="RHEA:34959"/>
        <dbReference type="ChEBI" id="CHEBI:16347"/>
    </reaction>
</comment>
<comment type="catalytic activity">
    <reaction evidence="2">
        <text>O-isobutanoyl-(R)-carnitine(in) = O-isobutanoyl-(R)-carnitine(out)</text>
        <dbReference type="Rhea" id="RHEA:74315"/>
        <dbReference type="ChEBI" id="CHEBI:84838"/>
    </reaction>
</comment>
<comment type="catalytic activity">
    <reaction evidence="2">
        <text>O-acetyl-(R)-carnitine(in) = O-acetyl-(R)-carnitine(out)</text>
        <dbReference type="Rhea" id="RHEA:74319"/>
        <dbReference type="ChEBI" id="CHEBI:57589"/>
    </reaction>
</comment>
<comment type="catalytic activity">
    <reaction evidence="2">
        <text>O-3-hydroxybutanoyl-(R)-carnitine(in) = O-3-hydroxybutanoyl-(R)-carnitine(out)</text>
        <dbReference type="Rhea" id="RHEA:74323"/>
        <dbReference type="ChEBI" id="CHEBI:84842"/>
    </reaction>
</comment>
<comment type="catalytic activity">
    <reaction evidence="2">
        <text>O-propanoyl-(R)-carnitine(in) = O-propanoyl-(R)-carnitine(out)</text>
        <dbReference type="Rhea" id="RHEA:74327"/>
        <dbReference type="ChEBI" id="CHEBI:53210"/>
    </reaction>
</comment>
<comment type="catalytic activity">
    <reaction evidence="2">
        <text>O-butanoyl-(R)-carnitine(in) = O-butanoyl-(R)-carnitine(out)</text>
        <dbReference type="Rhea" id="RHEA:74331"/>
        <dbReference type="ChEBI" id="CHEBI:21949"/>
    </reaction>
</comment>
<comment type="catalytic activity">
    <reaction evidence="2">
        <text>O-2-methylbutanoyl-(R)-carnitine(in) = O-2-methylbutanoyl-(R)-carnitine(out)</text>
        <dbReference type="Rhea" id="RHEA:74335"/>
        <dbReference type="ChEBI" id="CHEBI:84840"/>
    </reaction>
</comment>
<comment type="catalytic activity">
    <reaction evidence="2">
        <text>O-3-methylbutanoyl-(R)-carnitine(in) = O-3-methylbutanoyl-(R)-carnitine(out)</text>
        <dbReference type="Rhea" id="RHEA:74339"/>
        <dbReference type="ChEBI" id="CHEBI:70819"/>
    </reaction>
</comment>
<comment type="catalytic activity">
    <reaction evidence="2">
        <text>O-hexanoyl-(R)-carnitine(in) = O-hexanoyl-(R)-carnitine(out)</text>
        <dbReference type="Rhea" id="RHEA:74343"/>
        <dbReference type="ChEBI" id="CHEBI:84834"/>
    </reaction>
</comment>
<comment type="catalytic activity">
    <reaction evidence="3">
        <text>L-histidyl-L-proline diketopiperazine(in) = L-histidyl-L-proline diketopiperazine(out)</text>
        <dbReference type="Rhea" id="RHEA:74787"/>
        <dbReference type="ChEBI" id="CHEBI:90039"/>
    </reaction>
</comment>
<comment type="catalytic activity">
    <reaction evidence="3">
        <text>(R)-salsolinol(in) = (R)-salsolinol(out)</text>
        <dbReference type="Rhea" id="RHEA:74791"/>
        <dbReference type="ChEBI" id="CHEBI:194082"/>
    </reaction>
</comment>
<comment type="catalytic activity">
    <reaction evidence="3">
        <text>prostaglandin F2alpha(out) = prostaglandin F2alpha(in)</text>
        <dbReference type="Rhea" id="RHEA:50988"/>
        <dbReference type="ChEBI" id="CHEBI:57404"/>
    </reaction>
</comment>
<comment type="catalytic activity">
    <reaction evidence="3">
        <text>prostaglandin E2(out) = prostaglandin E2(in)</text>
        <dbReference type="Rhea" id="RHEA:50984"/>
        <dbReference type="ChEBI" id="CHEBI:606564"/>
    </reaction>
</comment>
<comment type="activity regulation">
    <text evidence="3 4">Phosphorylation of the transporter leads to changes in its substrate affinity, resulting in a regulation of the transport activity. In contrast with rat ortholog, ASP uptake is inhibited by protein kinase A (PKA) and C (PKC) activation. ASP uptake is also endogenously activated by calmodulin, the calmodulin-dependent kinase II and LCK tyrosine kinase (By similarity). Inhibited by cGMP, most likely through a cGMP-binding protein that interacts with OCT1 (By similarity).</text>
</comment>
<comment type="subcellular location">
    <subcellularLocation>
        <location evidence="3">Basolateral cell membrane</location>
        <topology evidence="6">Multi-pass membrane protein</topology>
    </subcellularLocation>
    <subcellularLocation>
        <location evidence="3">Apical cell membrane</location>
        <topology evidence="6">Multi-pass membrane protein</topology>
    </subcellularLocation>
    <subcellularLocation>
        <location evidence="3">Lateral cell membrane</location>
        <topology evidence="6">Multi-pass membrane protein</topology>
    </subcellularLocation>
    <subcellularLocation>
        <location evidence="3">Basal cell membrane</location>
        <topology evidence="6">Multi-pass membrane protein</topology>
    </subcellularLocation>
    <subcellularLocation>
        <location evidence="3">Cell membrane</location>
        <topology evidence="6">Multi-pass membrane protein</topology>
    </subcellularLocation>
    <text evidence="3 4">Localized to the sinusoidal/basolateral membrane of hepatocytes. Mainly localized to the basolateral membrane of renal proximal tubular cells (By similarity). However, also identified at the apical side of proximal tubular cells. Mainly expressed at the lateral membrane of enterocytes. Also observed at the apical side of enterocytes. Localized to the basal membrane of Sertoli cells (By similarity).</text>
</comment>
<comment type="domain">
    <text evidence="4">A large substrate binding region with partially overlapping binding domains for structurally different substrates is formed by several transmembrane helix domains (TMH) including TMH 2, 4, 10 and 11, and it is alternatingly exposed to the extracellular or intracellular side during substrate transport.</text>
</comment>
<comment type="domain">
    <text evidence="3">Contains one proline-rich sequence (Pro-Glu-Ser-Pro-Arg) that is required for transport activity.</text>
</comment>
<comment type="PTM">
    <text evidence="1">Phosphorylated.</text>
</comment>
<comment type="miscellaneous">
    <text evidence="3">Involved in the uptake of clinically used drugs including diabete treatment medicine metformin, neurotoxins 1-methyl-4-phenylpyridinium (MPP(+)) and iobenguane and platinum-based drug cisplatin (By similarity). Also involved in metformin efflux transport (By similarity). Metformin competitively inhibits OCT1-mediated thiamine uptake, leading to a decrease in hepatic steatosis (By similarity). Plays a role in the anticancer activity of cisplatin and may contribute to antitumor specificity (By similarity).</text>
</comment>
<comment type="similarity">
    <text evidence="6">Belongs to the major facilitator (TC 2.A.1) superfamily. Organic cation transporter (TC 2.A.1.19) family.</text>
</comment>
<comment type="caution">
    <text evidence="2 3 4">Cellular localization of OCT1 in the intestine and the kidney remains to be finally defined. While most authors have deduced a localization at the basolateral side of enterocytes consistent with a physiological role in organic anions uptake from the blood flow and intestinal excretion (By similarity), other studies demonstrated an apical localization (By similarity), supporting a function in intestinal absorption of organic anions and drugs (By similarity). Similarly, contradictory findings have shown a localization to the basolateral side (By similarity) or to the apical side (By similarity) of proximal tubules (By similarity). Affinity and capacity of the transporter for endogenous substrates vary among orthologs (By similarity).</text>
</comment>
<gene>
    <name type="primary">SLC22A1</name>
    <name type="synonym">OCT1</name>
</gene>
<evidence type="ECO:0000250" key="1"/>
<evidence type="ECO:0000250" key="2">
    <source>
        <dbReference type="UniProtKB" id="O08966"/>
    </source>
</evidence>
<evidence type="ECO:0000250" key="3">
    <source>
        <dbReference type="UniProtKB" id="O15245"/>
    </source>
</evidence>
<evidence type="ECO:0000250" key="4">
    <source>
        <dbReference type="UniProtKB" id="Q63089"/>
    </source>
</evidence>
<evidence type="ECO:0000255" key="5"/>
<evidence type="ECO:0000305" key="6"/>
<organism>
    <name type="scientific">Bos taurus</name>
    <name type="common">Bovine</name>
    <dbReference type="NCBI Taxonomy" id="9913"/>
    <lineage>
        <taxon>Eukaryota</taxon>
        <taxon>Metazoa</taxon>
        <taxon>Chordata</taxon>
        <taxon>Craniata</taxon>
        <taxon>Vertebrata</taxon>
        <taxon>Euteleostomi</taxon>
        <taxon>Mammalia</taxon>
        <taxon>Eutheria</taxon>
        <taxon>Laurasiatheria</taxon>
        <taxon>Artiodactyla</taxon>
        <taxon>Ruminantia</taxon>
        <taxon>Pecora</taxon>
        <taxon>Bovidae</taxon>
        <taxon>Bovinae</taxon>
        <taxon>Bos</taxon>
    </lineage>
</organism>
<protein>
    <recommendedName>
        <fullName>Solute carrier family 22 member 1</fullName>
    </recommendedName>
    <alternativeName>
        <fullName>Organic cation transporter 1</fullName>
    </alternativeName>
</protein>
<feature type="chain" id="PRO_0000333874" description="Solute carrier family 22 member 1">
    <location>
        <begin position="1"/>
        <end position="563"/>
    </location>
</feature>
<feature type="topological domain" description="Cytoplasmic" evidence="5">
    <location>
        <begin position="1"/>
        <end position="21"/>
    </location>
</feature>
<feature type="transmembrane region" description="Helical" evidence="5">
    <location>
        <begin position="22"/>
        <end position="42"/>
    </location>
</feature>
<feature type="topological domain" description="Extracellular" evidence="5">
    <location>
        <begin position="43"/>
        <end position="144"/>
    </location>
</feature>
<feature type="transmembrane region" description="Helical" evidence="5">
    <location>
        <begin position="145"/>
        <end position="165"/>
    </location>
</feature>
<feature type="topological domain" description="Cytoplasmic" evidence="5">
    <location>
        <begin position="166"/>
        <end position="171"/>
    </location>
</feature>
<feature type="transmembrane region" description="Helical" evidence="5">
    <location>
        <begin position="172"/>
        <end position="192"/>
    </location>
</feature>
<feature type="topological domain" description="Extracellular" evidence="5">
    <location>
        <begin position="193"/>
        <end position="196"/>
    </location>
</feature>
<feature type="transmembrane region" description="Helical" evidence="5">
    <location>
        <begin position="197"/>
        <end position="219"/>
    </location>
</feature>
<feature type="topological domain" description="Cytoplasmic" evidence="5">
    <location>
        <begin position="220"/>
        <end position="232"/>
    </location>
</feature>
<feature type="transmembrane region" description="Helical" evidence="5">
    <location>
        <begin position="233"/>
        <end position="253"/>
    </location>
</feature>
<feature type="topological domain" description="Extracellular" evidence="5">
    <location>
        <begin position="254"/>
        <end position="257"/>
    </location>
</feature>
<feature type="transmembrane region" description="Helical" evidence="5">
    <location>
        <begin position="258"/>
        <end position="278"/>
    </location>
</feature>
<feature type="topological domain" description="Cytoplasmic" evidence="5">
    <location>
        <begin position="279"/>
        <end position="342"/>
    </location>
</feature>
<feature type="transmembrane region" description="Helical" evidence="5">
    <location>
        <begin position="343"/>
        <end position="363"/>
    </location>
</feature>
<feature type="topological domain" description="Extracellular" evidence="5">
    <location>
        <begin position="364"/>
        <end position="371"/>
    </location>
</feature>
<feature type="transmembrane region" description="Helical" evidence="5">
    <location>
        <begin position="372"/>
        <end position="392"/>
    </location>
</feature>
<feature type="topological domain" description="Cytoplasmic" evidence="5">
    <location>
        <begin position="393"/>
        <end position="398"/>
    </location>
</feature>
<feature type="transmembrane region" description="Helical" evidence="5">
    <location>
        <begin position="399"/>
        <end position="418"/>
    </location>
</feature>
<feature type="topological domain" description="Extracellular" evidence="5">
    <location>
        <begin position="419"/>
        <end position="423"/>
    </location>
</feature>
<feature type="transmembrane region" description="Helical" evidence="5">
    <location>
        <begin position="424"/>
        <end position="446"/>
    </location>
</feature>
<feature type="topological domain" description="Cytoplasmic" evidence="5">
    <location>
        <begin position="447"/>
        <end position="459"/>
    </location>
</feature>
<feature type="transmembrane region" description="Helical" evidence="5">
    <location>
        <begin position="460"/>
        <end position="480"/>
    </location>
</feature>
<feature type="topological domain" description="Extracellular" evidence="5">
    <location>
        <begin position="481"/>
        <end position="487"/>
    </location>
</feature>
<feature type="transmembrane region" description="Helical" evidence="5">
    <location>
        <begin position="488"/>
        <end position="508"/>
    </location>
</feature>
<feature type="topological domain" description="Cytoplasmic" evidence="5">
    <location>
        <begin position="509"/>
        <end position="563"/>
    </location>
</feature>
<feature type="short sequence motif" description="Proline-rich sequence" evidence="3">
    <location>
        <begin position="278"/>
        <end position="282"/>
    </location>
</feature>
<feature type="modified residue" description="Phosphoserine" evidence="2">
    <location>
        <position position="328"/>
    </location>
</feature>
<feature type="glycosylation site" description="N-linked (GlcNAc...) asparagine" evidence="5">
    <location>
        <position position="71"/>
    </location>
</feature>
<sequence>MLTVDDVLEQVGEFGWFQKQTFLILCLLSAAFAPIYVGIVFLAFTPDHRCRSPGVAELSRRCGWSLAEELNYTVPGPGPESQCLRYEVDWNQSTLGCLDPLASLATNGSPLPLGPCEQGWVYDTPGSSIVTEFNLVCDDSWKVDLFQSCVNLGFFLGSLGVGYIADRFGRKVCLLATTLTCASLGVLTAVAPDYTSLLIFRLLQGLVSKGSWTAGYTLITEFVGLGYRRTVAILYQMAFTVGLVLLSGLAYILPHWRWLQLAVSLPIFLLLFRFWFVPESPRWLLSQKRNTEAIKIMDHIAQKNGKLPPADLKMLSLEEDVTEKLSPSFIDLFRTPNLRKYTFILMYLWFTSSVVYQGLIMHVGATGGNLYLDFLYSALVEFPAGFIILVTIDRFGRRYPLATSNLAAGLACFLMIFIPHDLPWLNIMVACVGRMGITIVFQMVCLVNAELFPTFIRNLGMMVCSSLCDLGGVLTPFLVFRLMEVWQGSPLILFAALGLVAGGMTLLLPETKGVTLPETIEDAENLQRKAKPKENKIYLQVQTSELNTQAAERDASQGTAQQK</sequence>